<accession>Q99JT6</accession>
<accession>Q3V372</accession>
<accession>Q5SYM9</accession>
<accession>Q8CHT9</accession>
<accession>Q9DCK5</accession>
<gene>
    <name type="primary">Tlcd1</name>
</gene>
<reference key="1">
    <citation type="journal article" date="2005" name="Science">
        <title>The transcriptional landscape of the mammalian genome.</title>
        <authorList>
            <person name="Carninci P."/>
            <person name="Kasukawa T."/>
            <person name="Katayama S."/>
            <person name="Gough J."/>
            <person name="Frith M.C."/>
            <person name="Maeda N."/>
            <person name="Oyama R."/>
            <person name="Ravasi T."/>
            <person name="Lenhard B."/>
            <person name="Wells C."/>
            <person name="Kodzius R."/>
            <person name="Shimokawa K."/>
            <person name="Bajic V.B."/>
            <person name="Brenner S.E."/>
            <person name="Batalov S."/>
            <person name="Forrest A.R."/>
            <person name="Zavolan M."/>
            <person name="Davis M.J."/>
            <person name="Wilming L.G."/>
            <person name="Aidinis V."/>
            <person name="Allen J.E."/>
            <person name="Ambesi-Impiombato A."/>
            <person name="Apweiler R."/>
            <person name="Aturaliya R.N."/>
            <person name="Bailey T.L."/>
            <person name="Bansal M."/>
            <person name="Baxter L."/>
            <person name="Beisel K.W."/>
            <person name="Bersano T."/>
            <person name="Bono H."/>
            <person name="Chalk A.M."/>
            <person name="Chiu K.P."/>
            <person name="Choudhary V."/>
            <person name="Christoffels A."/>
            <person name="Clutterbuck D.R."/>
            <person name="Crowe M.L."/>
            <person name="Dalla E."/>
            <person name="Dalrymple B.P."/>
            <person name="de Bono B."/>
            <person name="Della Gatta G."/>
            <person name="di Bernardo D."/>
            <person name="Down T."/>
            <person name="Engstrom P."/>
            <person name="Fagiolini M."/>
            <person name="Faulkner G."/>
            <person name="Fletcher C.F."/>
            <person name="Fukushima T."/>
            <person name="Furuno M."/>
            <person name="Futaki S."/>
            <person name="Gariboldi M."/>
            <person name="Georgii-Hemming P."/>
            <person name="Gingeras T.R."/>
            <person name="Gojobori T."/>
            <person name="Green R.E."/>
            <person name="Gustincich S."/>
            <person name="Harbers M."/>
            <person name="Hayashi Y."/>
            <person name="Hensch T.K."/>
            <person name="Hirokawa N."/>
            <person name="Hill D."/>
            <person name="Huminiecki L."/>
            <person name="Iacono M."/>
            <person name="Ikeo K."/>
            <person name="Iwama A."/>
            <person name="Ishikawa T."/>
            <person name="Jakt M."/>
            <person name="Kanapin A."/>
            <person name="Katoh M."/>
            <person name="Kawasawa Y."/>
            <person name="Kelso J."/>
            <person name="Kitamura H."/>
            <person name="Kitano H."/>
            <person name="Kollias G."/>
            <person name="Krishnan S.P."/>
            <person name="Kruger A."/>
            <person name="Kummerfeld S.K."/>
            <person name="Kurochkin I.V."/>
            <person name="Lareau L.F."/>
            <person name="Lazarevic D."/>
            <person name="Lipovich L."/>
            <person name="Liu J."/>
            <person name="Liuni S."/>
            <person name="McWilliam S."/>
            <person name="Madan Babu M."/>
            <person name="Madera M."/>
            <person name="Marchionni L."/>
            <person name="Matsuda H."/>
            <person name="Matsuzawa S."/>
            <person name="Miki H."/>
            <person name="Mignone F."/>
            <person name="Miyake S."/>
            <person name="Morris K."/>
            <person name="Mottagui-Tabar S."/>
            <person name="Mulder N."/>
            <person name="Nakano N."/>
            <person name="Nakauchi H."/>
            <person name="Ng P."/>
            <person name="Nilsson R."/>
            <person name="Nishiguchi S."/>
            <person name="Nishikawa S."/>
            <person name="Nori F."/>
            <person name="Ohara O."/>
            <person name="Okazaki Y."/>
            <person name="Orlando V."/>
            <person name="Pang K.C."/>
            <person name="Pavan W.J."/>
            <person name="Pavesi G."/>
            <person name="Pesole G."/>
            <person name="Petrovsky N."/>
            <person name="Piazza S."/>
            <person name="Reed J."/>
            <person name="Reid J.F."/>
            <person name="Ring B.Z."/>
            <person name="Ringwald M."/>
            <person name="Rost B."/>
            <person name="Ruan Y."/>
            <person name="Salzberg S.L."/>
            <person name="Sandelin A."/>
            <person name="Schneider C."/>
            <person name="Schoenbach C."/>
            <person name="Sekiguchi K."/>
            <person name="Semple C.A."/>
            <person name="Seno S."/>
            <person name="Sessa L."/>
            <person name="Sheng Y."/>
            <person name="Shibata Y."/>
            <person name="Shimada H."/>
            <person name="Shimada K."/>
            <person name="Silva D."/>
            <person name="Sinclair B."/>
            <person name="Sperling S."/>
            <person name="Stupka E."/>
            <person name="Sugiura K."/>
            <person name="Sultana R."/>
            <person name="Takenaka Y."/>
            <person name="Taki K."/>
            <person name="Tammoja K."/>
            <person name="Tan S.L."/>
            <person name="Tang S."/>
            <person name="Taylor M.S."/>
            <person name="Tegner J."/>
            <person name="Teichmann S.A."/>
            <person name="Ueda H.R."/>
            <person name="van Nimwegen E."/>
            <person name="Verardo R."/>
            <person name="Wei C.L."/>
            <person name="Yagi K."/>
            <person name="Yamanishi H."/>
            <person name="Zabarovsky E."/>
            <person name="Zhu S."/>
            <person name="Zimmer A."/>
            <person name="Hide W."/>
            <person name="Bult C."/>
            <person name="Grimmond S.M."/>
            <person name="Teasdale R.D."/>
            <person name="Liu E.T."/>
            <person name="Brusic V."/>
            <person name="Quackenbush J."/>
            <person name="Wahlestedt C."/>
            <person name="Mattick J.S."/>
            <person name="Hume D.A."/>
            <person name="Kai C."/>
            <person name="Sasaki D."/>
            <person name="Tomaru Y."/>
            <person name="Fukuda S."/>
            <person name="Kanamori-Katayama M."/>
            <person name="Suzuki M."/>
            <person name="Aoki J."/>
            <person name="Arakawa T."/>
            <person name="Iida J."/>
            <person name="Imamura K."/>
            <person name="Itoh M."/>
            <person name="Kato T."/>
            <person name="Kawaji H."/>
            <person name="Kawagashira N."/>
            <person name="Kawashima T."/>
            <person name="Kojima M."/>
            <person name="Kondo S."/>
            <person name="Konno H."/>
            <person name="Nakano K."/>
            <person name="Ninomiya N."/>
            <person name="Nishio T."/>
            <person name="Okada M."/>
            <person name="Plessy C."/>
            <person name="Shibata K."/>
            <person name="Shiraki T."/>
            <person name="Suzuki S."/>
            <person name="Tagami M."/>
            <person name="Waki K."/>
            <person name="Watahiki A."/>
            <person name="Okamura-Oho Y."/>
            <person name="Suzuki H."/>
            <person name="Kawai J."/>
            <person name="Hayashizaki Y."/>
        </authorList>
    </citation>
    <scope>NUCLEOTIDE SEQUENCE [LARGE SCALE MRNA] (ISOFORMS 1; 2; 3 AND 4)</scope>
    <source>
        <strain>C57BL/6J</strain>
        <tissue>Adipose tissue</tissue>
        <tissue>Kidney</tissue>
        <tissue>Thymus</tissue>
    </source>
</reference>
<reference key="2">
    <citation type="journal article" date="2009" name="PLoS Biol.">
        <title>Lineage-specific biology revealed by a finished genome assembly of the mouse.</title>
        <authorList>
            <person name="Church D.M."/>
            <person name="Goodstadt L."/>
            <person name="Hillier L.W."/>
            <person name="Zody M.C."/>
            <person name="Goldstein S."/>
            <person name="She X."/>
            <person name="Bult C.J."/>
            <person name="Agarwala R."/>
            <person name="Cherry J.L."/>
            <person name="DiCuccio M."/>
            <person name="Hlavina W."/>
            <person name="Kapustin Y."/>
            <person name="Meric P."/>
            <person name="Maglott D."/>
            <person name="Birtle Z."/>
            <person name="Marques A.C."/>
            <person name="Graves T."/>
            <person name="Zhou S."/>
            <person name="Teague B."/>
            <person name="Potamousis K."/>
            <person name="Churas C."/>
            <person name="Place M."/>
            <person name="Herschleb J."/>
            <person name="Runnheim R."/>
            <person name="Forrest D."/>
            <person name="Amos-Landgraf J."/>
            <person name="Schwartz D.C."/>
            <person name="Cheng Z."/>
            <person name="Lindblad-Toh K."/>
            <person name="Eichler E.E."/>
            <person name="Ponting C.P."/>
        </authorList>
    </citation>
    <scope>NUCLEOTIDE SEQUENCE [LARGE SCALE GENOMIC DNA]</scope>
    <source>
        <strain>C57BL/6J</strain>
    </source>
</reference>
<reference key="3">
    <citation type="journal article" date="2004" name="Genome Res.">
        <title>The status, quality, and expansion of the NIH full-length cDNA project: the Mammalian Gene Collection (MGC).</title>
        <authorList>
            <consortium name="The MGC Project Team"/>
        </authorList>
    </citation>
    <scope>NUCLEOTIDE SEQUENCE [LARGE SCALE MRNA] (ISOFORMS 1 AND 3)</scope>
    <source>
        <strain>Czech II</strain>
        <strain>FVB/N</strain>
        <tissue>Mammary tumor</tissue>
    </source>
</reference>
<feature type="signal peptide" evidence="3">
    <location>
        <begin position="1"/>
        <end position="27"/>
    </location>
</feature>
<feature type="chain" id="PRO_0000285678" description="TLC domain-containing protein 1">
    <location>
        <begin position="28"/>
        <end position="247"/>
    </location>
</feature>
<feature type="topological domain" description="Extracellular" evidence="1">
    <location>
        <begin position="28"/>
        <end position="46"/>
    </location>
</feature>
<feature type="transmembrane region" description="Helical" evidence="3">
    <location>
        <begin position="47"/>
        <end position="67"/>
    </location>
</feature>
<feature type="topological domain" description="Cytoplasmic" evidence="1">
    <location>
        <begin position="68"/>
        <end position="83"/>
    </location>
</feature>
<feature type="transmembrane region" description="Helical" evidence="3">
    <location>
        <begin position="84"/>
        <end position="104"/>
    </location>
</feature>
<feature type="topological domain" description="Extracellular" evidence="1">
    <location>
        <begin position="105"/>
        <end position="123"/>
    </location>
</feature>
<feature type="intramembrane region" description="Helical" evidence="3">
    <location>
        <begin position="124"/>
        <end position="144"/>
    </location>
</feature>
<feature type="topological domain" description="Extracellular" evidence="1">
    <location>
        <begin position="145"/>
        <end position="173"/>
    </location>
</feature>
<feature type="transmembrane region" description="Helical" evidence="3">
    <location>
        <begin position="174"/>
        <end position="194"/>
    </location>
</feature>
<feature type="topological domain" description="Cytoplasmic" evidence="1">
    <location>
        <begin position="195"/>
        <end position="201"/>
    </location>
</feature>
<feature type="transmembrane region" description="Helical" evidence="3">
    <location>
        <begin position="202"/>
        <end position="222"/>
    </location>
</feature>
<feature type="topological domain" description="Extracellular" evidence="1">
    <location>
        <begin position="223"/>
        <end position="247"/>
    </location>
</feature>
<feature type="domain" description="TLC" evidence="4">
    <location>
        <begin position="40"/>
        <end position="234"/>
    </location>
</feature>
<feature type="splice variant" id="VSP_024887" description="In isoform 3." evidence="5 6">
    <original>MPLLFHPAWPLLLGATLTFRALRRVLCRLPQPAHVQTDPLRTWRWHNLLVSFTHSIVSGIWALLC</original>
    <variation>MRWPWDLSRGARTGLPLAIPITGEQTPRISPDSVWKTTQPRTAVGNPS</variation>
    <location>
        <begin position="1"/>
        <end position="65"/>
    </location>
</feature>
<feature type="splice variant" id="VSP_024888" description="In isoform 4." evidence="6">
    <original>AMGAFFS</original>
    <variation>VRENPVK</variation>
    <location>
        <begin position="121"/>
        <end position="127"/>
    </location>
</feature>
<feature type="splice variant" id="VSP_024889" description="In isoform 4." evidence="6">
    <location>
        <begin position="128"/>
        <end position="247"/>
    </location>
</feature>
<feature type="splice variant" id="VSP_024890" description="In isoform 2." evidence="6">
    <location>
        <begin position="170"/>
        <end position="196"/>
    </location>
</feature>
<feature type="sequence conflict" description="In Ref. 1; BAE20654." evidence="7" ref="1">
    <original>R</original>
    <variation>H</variation>
    <location>
        <position position="28"/>
    </location>
</feature>
<name>TLCD1_MOUSE</name>
<sequence>MPLLFHPAWPLLLGATLTFRALRRVLCRLPQPAHVQTDPLRTWRWHNLLVSFTHSIVSGIWALLCLWQTPEMLVEIETAWSASGYLLVCFSAGYFIHDTVDIVVSKQTRASWEYLVHHVMAMGAFFSGIFWKRFVGGGVLTLLVEVSNIFLTLRMMMKINNAQDLLLYKVNKYINLVMYFLFRLAPQAYLTKFFLQYAGQRTLGTFLLAILLMLDLMIIIYFSRLLRSDFCPERAPRRQQKDKFLTE</sequence>
<evidence type="ECO:0000250" key="1">
    <source>
        <dbReference type="UniProtKB" id="F1NZP5"/>
    </source>
</evidence>
<evidence type="ECO:0000250" key="2">
    <source>
        <dbReference type="UniProtKB" id="Q96CP7"/>
    </source>
</evidence>
<evidence type="ECO:0000255" key="3"/>
<evidence type="ECO:0000255" key="4">
    <source>
        <dbReference type="PROSITE-ProRule" id="PRU00205"/>
    </source>
</evidence>
<evidence type="ECO:0000303" key="5">
    <source>
    </source>
</evidence>
<evidence type="ECO:0000303" key="6">
    <source>
    </source>
</evidence>
<evidence type="ECO:0000305" key="7"/>
<proteinExistence type="evidence at transcript level"/>
<keyword id="KW-0025">Alternative splicing</keyword>
<keyword id="KW-1003">Cell membrane</keyword>
<keyword id="KW-0472">Membrane</keyword>
<keyword id="KW-1185">Reference proteome</keyword>
<keyword id="KW-0732">Signal</keyword>
<keyword id="KW-0812">Transmembrane</keyword>
<keyword id="KW-1133">Transmembrane helix</keyword>
<comment type="function">
    <text evidence="2">Regulates the composition and fluidity of the plasma membrane (By similarity). Inhibits the incorporation of membrane-fluidizing phospholipids containing omega-3 long-chain polyunsaturated fatty acids (LCPUFA) and thereby promotes membrane rigidity (By similarity). Does not appear to have any effect on LCPUFA synthesis (By similarity).</text>
</comment>
<comment type="subcellular location">
    <subcellularLocation>
        <location evidence="2">Cell membrane</location>
        <topology evidence="1">Multi-pass membrane protein</topology>
    </subcellularLocation>
</comment>
<comment type="alternative products">
    <event type="alternative splicing"/>
    <isoform>
        <id>Q99JT6-1</id>
        <name>1</name>
        <sequence type="displayed"/>
    </isoform>
    <isoform>
        <id>Q99JT6-2</id>
        <name>2</name>
        <sequence type="described" ref="VSP_024890"/>
    </isoform>
    <isoform>
        <id>Q99JT6-3</id>
        <name>3</name>
        <sequence type="described" ref="VSP_024887"/>
    </isoform>
    <isoform>
        <id>Q99JT6-4</id>
        <name>4</name>
        <sequence type="described" ref="VSP_024888 VSP_024889"/>
    </isoform>
</comment>
<comment type="caution">
    <text evidence="1 2">Was originally proposed to be a calcium channel facilitator (By similarity). However, a more recent study shows that this protein regulates membrane phospholipid homeostasis (By similarity). Therefore, any effects on calcium flux are most likely a secondary consequence of defects in membrane composition or fluidity (By similarity).</text>
</comment>
<dbReference type="EMBL" id="AK002703">
    <property type="protein sequence ID" value="BAB22297.1"/>
    <property type="molecule type" value="mRNA"/>
</dbReference>
<dbReference type="EMBL" id="AK046577">
    <property type="protein sequence ID" value="BAE20654.1"/>
    <property type="molecule type" value="mRNA"/>
</dbReference>
<dbReference type="EMBL" id="AK161721">
    <property type="protein sequence ID" value="BAE36548.1"/>
    <property type="molecule type" value="mRNA"/>
</dbReference>
<dbReference type="EMBL" id="AK165432">
    <property type="protein sequence ID" value="BAE38185.1"/>
    <property type="molecule type" value="mRNA"/>
</dbReference>
<dbReference type="EMBL" id="AL591070">
    <property type="status" value="NOT_ANNOTATED_CDS"/>
    <property type="molecule type" value="Genomic_DNA"/>
</dbReference>
<dbReference type="EMBL" id="BC005702">
    <property type="protein sequence ID" value="AAH05702.1"/>
    <property type="molecule type" value="mRNA"/>
</dbReference>
<dbReference type="EMBL" id="BC039182">
    <property type="protein sequence ID" value="AAH39182.1"/>
    <property type="molecule type" value="mRNA"/>
</dbReference>
<dbReference type="CCDS" id="CCDS25092.1">
    <molecule id="Q99JT6-1"/>
</dbReference>
<dbReference type="CCDS" id="CCDS70257.1">
    <molecule id="Q99JT6-3"/>
</dbReference>
<dbReference type="RefSeq" id="NP_001278165.1">
    <molecule id="Q99JT6-3"/>
    <property type="nucleotide sequence ID" value="NM_001291236.1"/>
</dbReference>
<dbReference type="RefSeq" id="NP_001278166.1">
    <molecule id="Q99JT6-3"/>
    <property type="nucleotide sequence ID" value="NM_001291237.2"/>
</dbReference>
<dbReference type="RefSeq" id="NP_080984.1">
    <molecule id="Q99JT6-1"/>
    <property type="nucleotide sequence ID" value="NM_026708.2"/>
</dbReference>
<dbReference type="RefSeq" id="XP_006534117.1">
    <property type="nucleotide sequence ID" value="XM_006534054.2"/>
</dbReference>
<dbReference type="BioGRID" id="212831">
    <property type="interactions" value="2"/>
</dbReference>
<dbReference type="FunCoup" id="Q99JT6">
    <property type="interactions" value="499"/>
</dbReference>
<dbReference type="STRING" id="10090.ENSMUSP00000114202"/>
<dbReference type="PhosphoSitePlus" id="Q99JT6"/>
<dbReference type="SwissPalm" id="Q99JT6"/>
<dbReference type="PaxDb" id="10090-ENSMUSP00000114202"/>
<dbReference type="ProteomicsDB" id="259397">
    <molecule id="Q99JT6-1"/>
</dbReference>
<dbReference type="ProteomicsDB" id="259398">
    <molecule id="Q99JT6-2"/>
</dbReference>
<dbReference type="ProteomicsDB" id="259399">
    <molecule id="Q99JT6-3"/>
</dbReference>
<dbReference type="ProteomicsDB" id="259400">
    <molecule id="Q99JT6-4"/>
</dbReference>
<dbReference type="Antibodypedia" id="51370">
    <property type="antibodies" value="74 antibodies from 15 providers"/>
</dbReference>
<dbReference type="Ensembl" id="ENSMUST00000092880.14">
    <molecule id="Q99JT6-3"/>
    <property type="protein sequence ID" value="ENSMUSP00000090556.8"/>
    <property type="gene ID" value="ENSMUSG00000019437.18"/>
</dbReference>
<dbReference type="Ensembl" id="ENSMUST00000098545.12">
    <molecule id="Q99JT6-2"/>
    <property type="protein sequence ID" value="ENSMUSP00000096145.6"/>
    <property type="gene ID" value="ENSMUSG00000019437.18"/>
</dbReference>
<dbReference type="Ensembl" id="ENSMUST00000108338.2">
    <molecule id="Q99JT6-4"/>
    <property type="protein sequence ID" value="ENSMUSP00000103975.2"/>
    <property type="gene ID" value="ENSMUSG00000019437.18"/>
</dbReference>
<dbReference type="Ensembl" id="ENSMUST00000127587.8">
    <molecule id="Q99JT6-1"/>
    <property type="protein sequence ID" value="ENSMUSP00000114202.2"/>
    <property type="gene ID" value="ENSMUSG00000019437.18"/>
</dbReference>
<dbReference type="GeneID" id="68385"/>
<dbReference type="KEGG" id="mmu:68385"/>
<dbReference type="UCSC" id="uc007kij.2">
    <molecule id="Q99JT6-1"/>
    <property type="organism name" value="mouse"/>
</dbReference>
<dbReference type="UCSC" id="uc007kik.2">
    <molecule id="Q99JT6-3"/>
    <property type="organism name" value="mouse"/>
</dbReference>
<dbReference type="AGR" id="MGI:1915572"/>
<dbReference type="CTD" id="116238"/>
<dbReference type="MGI" id="MGI:1915572">
    <property type="gene designation" value="Tlcd1"/>
</dbReference>
<dbReference type="VEuPathDB" id="HostDB:ENSMUSG00000019437"/>
<dbReference type="eggNOG" id="KOG4474">
    <property type="taxonomic scope" value="Eukaryota"/>
</dbReference>
<dbReference type="GeneTree" id="ENSGT01010000222313"/>
<dbReference type="HOGENOM" id="CLU_056440_2_0_1"/>
<dbReference type="InParanoid" id="Q99JT6"/>
<dbReference type="OMA" id="CAGQNGM"/>
<dbReference type="OrthoDB" id="10266980at2759"/>
<dbReference type="PhylomeDB" id="Q99JT6"/>
<dbReference type="TreeFam" id="TF315115"/>
<dbReference type="BioGRID-ORCS" id="68385">
    <property type="hits" value="8 hits in 80 CRISPR screens"/>
</dbReference>
<dbReference type="PRO" id="PR:Q99JT6"/>
<dbReference type="Proteomes" id="UP000000589">
    <property type="component" value="Chromosome 11"/>
</dbReference>
<dbReference type="RNAct" id="Q99JT6">
    <property type="molecule type" value="protein"/>
</dbReference>
<dbReference type="Bgee" id="ENSMUSG00000019437">
    <property type="expression patterns" value="Expressed in yolk sac and 230 other cell types or tissues"/>
</dbReference>
<dbReference type="ExpressionAtlas" id="Q99JT6">
    <property type="expression patterns" value="baseline and differential"/>
</dbReference>
<dbReference type="GO" id="GO:0005886">
    <property type="term" value="C:plasma membrane"/>
    <property type="evidence" value="ECO:0007669"/>
    <property type="project" value="UniProtKB-SubCell"/>
</dbReference>
<dbReference type="GO" id="GO:0071709">
    <property type="term" value="P:membrane assembly"/>
    <property type="evidence" value="ECO:0007669"/>
    <property type="project" value="Ensembl"/>
</dbReference>
<dbReference type="GO" id="GO:0055091">
    <property type="term" value="P:phospholipid homeostasis"/>
    <property type="evidence" value="ECO:0007669"/>
    <property type="project" value="Ensembl"/>
</dbReference>
<dbReference type="GO" id="GO:0007009">
    <property type="term" value="P:plasma membrane organization"/>
    <property type="evidence" value="ECO:0007669"/>
    <property type="project" value="Ensembl"/>
</dbReference>
<dbReference type="GO" id="GO:0097035">
    <property type="term" value="P:regulation of membrane lipid distribution"/>
    <property type="evidence" value="ECO:0007669"/>
    <property type="project" value="Ensembl"/>
</dbReference>
<dbReference type="InterPro" id="IPR006634">
    <property type="entry name" value="TLC-dom"/>
</dbReference>
<dbReference type="InterPro" id="IPR050846">
    <property type="entry name" value="TLCD"/>
</dbReference>
<dbReference type="PANTHER" id="PTHR13439">
    <property type="entry name" value="CT120 PROTEIN"/>
    <property type="match status" value="1"/>
</dbReference>
<dbReference type="PANTHER" id="PTHR13439:SF5">
    <property type="entry name" value="TLC DOMAIN-CONTAINING PROTEIN 1"/>
    <property type="match status" value="1"/>
</dbReference>
<dbReference type="Pfam" id="PF03798">
    <property type="entry name" value="TRAM_LAG1_CLN8"/>
    <property type="match status" value="1"/>
</dbReference>
<dbReference type="SMART" id="SM00724">
    <property type="entry name" value="TLC"/>
    <property type="match status" value="1"/>
</dbReference>
<dbReference type="PROSITE" id="PS50922">
    <property type="entry name" value="TLC"/>
    <property type="match status" value="1"/>
</dbReference>
<protein>
    <recommendedName>
        <fullName>TLC domain-containing protein 1</fullName>
    </recommendedName>
    <alternativeName>
        <fullName>Calfacilitin</fullName>
    </alternativeName>
</protein>
<organism>
    <name type="scientific">Mus musculus</name>
    <name type="common">Mouse</name>
    <dbReference type="NCBI Taxonomy" id="10090"/>
    <lineage>
        <taxon>Eukaryota</taxon>
        <taxon>Metazoa</taxon>
        <taxon>Chordata</taxon>
        <taxon>Craniata</taxon>
        <taxon>Vertebrata</taxon>
        <taxon>Euteleostomi</taxon>
        <taxon>Mammalia</taxon>
        <taxon>Eutheria</taxon>
        <taxon>Euarchontoglires</taxon>
        <taxon>Glires</taxon>
        <taxon>Rodentia</taxon>
        <taxon>Myomorpha</taxon>
        <taxon>Muroidea</taxon>
        <taxon>Muridae</taxon>
        <taxon>Murinae</taxon>
        <taxon>Mus</taxon>
        <taxon>Mus</taxon>
    </lineage>
</organism>